<accession>Q9LY17</accession>
<organism>
    <name type="scientific">Arabidopsis thaliana</name>
    <name type="common">Mouse-ear cress</name>
    <dbReference type="NCBI Taxonomy" id="3702"/>
    <lineage>
        <taxon>Eukaryota</taxon>
        <taxon>Viridiplantae</taxon>
        <taxon>Streptophyta</taxon>
        <taxon>Embryophyta</taxon>
        <taxon>Tracheophyta</taxon>
        <taxon>Spermatophyta</taxon>
        <taxon>Magnoliopsida</taxon>
        <taxon>eudicotyledons</taxon>
        <taxon>Gunneridae</taxon>
        <taxon>Pentapetalae</taxon>
        <taxon>rosids</taxon>
        <taxon>malvids</taxon>
        <taxon>Brassicales</taxon>
        <taxon>Brassicaceae</taxon>
        <taxon>Camelineae</taxon>
        <taxon>Arabidopsis</taxon>
    </lineage>
</organism>
<reference key="1">
    <citation type="journal article" date="2000" name="Nature">
        <title>Sequence and analysis of chromosome 5 of the plant Arabidopsis thaliana.</title>
        <authorList>
            <person name="Tabata S."/>
            <person name="Kaneko T."/>
            <person name="Nakamura Y."/>
            <person name="Kotani H."/>
            <person name="Kato T."/>
            <person name="Asamizu E."/>
            <person name="Miyajima N."/>
            <person name="Sasamoto S."/>
            <person name="Kimura T."/>
            <person name="Hosouchi T."/>
            <person name="Kawashima K."/>
            <person name="Kohara M."/>
            <person name="Matsumoto M."/>
            <person name="Matsuno A."/>
            <person name="Muraki A."/>
            <person name="Nakayama S."/>
            <person name="Nakazaki N."/>
            <person name="Naruo K."/>
            <person name="Okumura S."/>
            <person name="Shinpo S."/>
            <person name="Takeuchi C."/>
            <person name="Wada T."/>
            <person name="Watanabe A."/>
            <person name="Yamada M."/>
            <person name="Yasuda M."/>
            <person name="Sato S."/>
            <person name="de la Bastide M."/>
            <person name="Huang E."/>
            <person name="Spiegel L."/>
            <person name="Gnoj L."/>
            <person name="O'Shaughnessy A."/>
            <person name="Preston R."/>
            <person name="Habermann K."/>
            <person name="Murray J."/>
            <person name="Johnson D."/>
            <person name="Rohlfing T."/>
            <person name="Nelson J."/>
            <person name="Stoneking T."/>
            <person name="Pepin K."/>
            <person name="Spieth J."/>
            <person name="Sekhon M."/>
            <person name="Armstrong J."/>
            <person name="Becker M."/>
            <person name="Belter E."/>
            <person name="Cordum H."/>
            <person name="Cordes M."/>
            <person name="Courtney L."/>
            <person name="Courtney W."/>
            <person name="Dante M."/>
            <person name="Du H."/>
            <person name="Edwards J."/>
            <person name="Fryman J."/>
            <person name="Haakensen B."/>
            <person name="Lamar E."/>
            <person name="Latreille P."/>
            <person name="Leonard S."/>
            <person name="Meyer R."/>
            <person name="Mulvaney E."/>
            <person name="Ozersky P."/>
            <person name="Riley A."/>
            <person name="Strowmatt C."/>
            <person name="Wagner-McPherson C."/>
            <person name="Wollam A."/>
            <person name="Yoakum M."/>
            <person name="Bell M."/>
            <person name="Dedhia N."/>
            <person name="Parnell L."/>
            <person name="Shah R."/>
            <person name="Rodriguez M."/>
            <person name="Hoon See L."/>
            <person name="Vil D."/>
            <person name="Baker J."/>
            <person name="Kirchoff K."/>
            <person name="Toth K."/>
            <person name="King L."/>
            <person name="Bahret A."/>
            <person name="Miller B."/>
            <person name="Marra M.A."/>
            <person name="Martienssen R."/>
            <person name="McCombie W.R."/>
            <person name="Wilson R.K."/>
            <person name="Murphy G."/>
            <person name="Bancroft I."/>
            <person name="Volckaert G."/>
            <person name="Wambutt R."/>
            <person name="Duesterhoeft A."/>
            <person name="Stiekema W."/>
            <person name="Pohl T."/>
            <person name="Entian K.-D."/>
            <person name="Terryn N."/>
            <person name="Hartley N."/>
            <person name="Bent E."/>
            <person name="Johnson S."/>
            <person name="Langham S.-A."/>
            <person name="McCullagh B."/>
            <person name="Robben J."/>
            <person name="Grymonprez B."/>
            <person name="Zimmermann W."/>
            <person name="Ramsperger U."/>
            <person name="Wedler H."/>
            <person name="Balke K."/>
            <person name="Wedler E."/>
            <person name="Peters S."/>
            <person name="van Staveren M."/>
            <person name="Dirkse W."/>
            <person name="Mooijman P."/>
            <person name="Klein Lankhorst R."/>
            <person name="Weitzenegger T."/>
            <person name="Bothe G."/>
            <person name="Rose M."/>
            <person name="Hauf J."/>
            <person name="Berneiser S."/>
            <person name="Hempel S."/>
            <person name="Feldpausch M."/>
            <person name="Lamberth S."/>
            <person name="Villarroel R."/>
            <person name="Gielen J."/>
            <person name="Ardiles W."/>
            <person name="Bents O."/>
            <person name="Lemcke K."/>
            <person name="Kolesov G."/>
            <person name="Mayer K.F.X."/>
            <person name="Rudd S."/>
            <person name="Schoof H."/>
            <person name="Schueller C."/>
            <person name="Zaccaria P."/>
            <person name="Mewes H.-W."/>
            <person name="Bevan M."/>
            <person name="Fransz P.F."/>
        </authorList>
    </citation>
    <scope>NUCLEOTIDE SEQUENCE [LARGE SCALE GENOMIC DNA]</scope>
    <source>
        <strain>cv. Columbia</strain>
    </source>
</reference>
<reference key="2">
    <citation type="journal article" date="2017" name="Plant J.">
        <title>Araport11: a complete reannotation of the Arabidopsis thaliana reference genome.</title>
        <authorList>
            <person name="Cheng C.Y."/>
            <person name="Krishnakumar V."/>
            <person name="Chan A.P."/>
            <person name="Thibaud-Nissen F."/>
            <person name="Schobel S."/>
            <person name="Town C.D."/>
        </authorList>
    </citation>
    <scope>GENOME REANNOTATION</scope>
    <source>
        <strain>cv. Columbia</strain>
    </source>
</reference>
<reference key="3">
    <citation type="journal article" date="2004" name="Genome Res.">
        <title>Whole genome sequence comparisons and 'full-length' cDNA sequences: a combined approach to evaluate and improve Arabidopsis genome annotation.</title>
        <authorList>
            <person name="Castelli V."/>
            <person name="Aury J.-M."/>
            <person name="Jaillon O."/>
            <person name="Wincker P."/>
            <person name="Clepet C."/>
            <person name="Menard M."/>
            <person name="Cruaud C."/>
            <person name="Quetier F."/>
            <person name="Scarpelli C."/>
            <person name="Schaechter V."/>
            <person name="Temple G."/>
            <person name="Caboche M."/>
            <person name="Weissenbach J."/>
            <person name="Salanoubat M."/>
        </authorList>
    </citation>
    <scope>NUCLEOTIDE SEQUENCE [LARGE SCALE MRNA]</scope>
    <source>
        <strain>cv. Columbia</strain>
    </source>
</reference>
<reference key="4">
    <citation type="journal article" date="2004" name="Carbohydr. Res.">
        <title>Pectin methylesterases: sequence-structural features and phylogenetic relationships.</title>
        <authorList>
            <person name="Markovic O."/>
            <person name="Janecek S."/>
        </authorList>
    </citation>
    <scope>GENE FAMILY</scope>
    <scope>NOMENCLATURE</scope>
</reference>
<reference key="5">
    <citation type="journal article" date="2006" name="Planta">
        <title>Comprehensive expression profiling of the pectin methylesterase gene family during silique development in Arabidopsis thaliana.</title>
        <authorList>
            <person name="Louvet R."/>
            <person name="Cavel E."/>
            <person name="Gutierrez L."/>
            <person name="Guenin S."/>
            <person name="Roger D."/>
            <person name="Gillet F."/>
            <person name="Guerineau F."/>
            <person name="Pelloux J."/>
        </authorList>
    </citation>
    <scope>TISSUE SPECIFICITY</scope>
</reference>
<name>PME50_ARATH</name>
<dbReference type="EC" id="3.1.1.11"/>
<dbReference type="EMBL" id="AL163912">
    <property type="protein sequence ID" value="CAB87932.1"/>
    <property type="molecule type" value="Genomic_DNA"/>
</dbReference>
<dbReference type="EMBL" id="CP002688">
    <property type="protein sequence ID" value="AED91156.1"/>
    <property type="molecule type" value="Genomic_DNA"/>
</dbReference>
<dbReference type="EMBL" id="BX830118">
    <property type="status" value="NOT_ANNOTATED_CDS"/>
    <property type="molecule type" value="mRNA"/>
</dbReference>
<dbReference type="PIR" id="T49882">
    <property type="entry name" value="T49882"/>
</dbReference>
<dbReference type="RefSeq" id="NP_196360.1">
    <property type="nucleotide sequence ID" value="NM_120825.5"/>
</dbReference>
<dbReference type="SMR" id="Q9LY17"/>
<dbReference type="FunCoup" id="Q9LY17">
    <property type="interactions" value="67"/>
</dbReference>
<dbReference type="STRING" id="3702.Q9LY17"/>
<dbReference type="PaxDb" id="3702-AT5G07430.1"/>
<dbReference type="ProteomicsDB" id="234786"/>
<dbReference type="EnsemblPlants" id="AT5G07430.1">
    <property type="protein sequence ID" value="AT5G07430.1"/>
    <property type="gene ID" value="AT5G07430"/>
</dbReference>
<dbReference type="GeneID" id="830634"/>
<dbReference type="Gramene" id="AT5G07430.1">
    <property type="protein sequence ID" value="AT5G07430.1"/>
    <property type="gene ID" value="AT5G07430"/>
</dbReference>
<dbReference type="KEGG" id="ath:AT5G07430"/>
<dbReference type="Araport" id="AT5G07430"/>
<dbReference type="TAIR" id="AT5G07430"/>
<dbReference type="eggNOG" id="ENOG502R3C8">
    <property type="taxonomic scope" value="Eukaryota"/>
</dbReference>
<dbReference type="HOGENOM" id="CLU_012243_3_3_1"/>
<dbReference type="InParanoid" id="Q9LY17"/>
<dbReference type="OMA" id="GYISMSV"/>
<dbReference type="PhylomeDB" id="Q9LY17"/>
<dbReference type="BioCyc" id="ARA:AT5G07430-MONOMER"/>
<dbReference type="UniPathway" id="UPA00545">
    <property type="reaction ID" value="UER00823"/>
</dbReference>
<dbReference type="PRO" id="PR:Q9LY17"/>
<dbReference type="Proteomes" id="UP000006548">
    <property type="component" value="Chromosome 5"/>
</dbReference>
<dbReference type="ExpressionAtlas" id="Q9LY17">
    <property type="expression patterns" value="baseline and differential"/>
</dbReference>
<dbReference type="GO" id="GO:0005576">
    <property type="term" value="C:extracellular region"/>
    <property type="evidence" value="ECO:0007669"/>
    <property type="project" value="UniProtKB-KW"/>
</dbReference>
<dbReference type="GO" id="GO:0030599">
    <property type="term" value="F:pectinesterase activity"/>
    <property type="evidence" value="ECO:0007669"/>
    <property type="project" value="UniProtKB-EC"/>
</dbReference>
<dbReference type="GO" id="GO:0042545">
    <property type="term" value="P:cell wall modification"/>
    <property type="evidence" value="ECO:0007669"/>
    <property type="project" value="InterPro"/>
</dbReference>
<dbReference type="GO" id="GO:0045490">
    <property type="term" value="P:pectin catabolic process"/>
    <property type="evidence" value="ECO:0007669"/>
    <property type="project" value="UniProtKB-UniPathway"/>
</dbReference>
<dbReference type="FunFam" id="2.160.20.10:FF:000008">
    <property type="entry name" value="Pectinesterase"/>
    <property type="match status" value="1"/>
</dbReference>
<dbReference type="Gene3D" id="2.160.20.10">
    <property type="entry name" value="Single-stranded right-handed beta-helix, Pectin lyase-like"/>
    <property type="match status" value="1"/>
</dbReference>
<dbReference type="InterPro" id="IPR012334">
    <property type="entry name" value="Pectin_lyas_fold"/>
</dbReference>
<dbReference type="InterPro" id="IPR011050">
    <property type="entry name" value="Pectin_lyase_fold/virulence"/>
</dbReference>
<dbReference type="InterPro" id="IPR000070">
    <property type="entry name" value="Pectinesterase_cat"/>
</dbReference>
<dbReference type="PANTHER" id="PTHR31321">
    <property type="entry name" value="ACYL-COA THIOESTER HYDROLASE YBHC-RELATED"/>
    <property type="match status" value="1"/>
</dbReference>
<dbReference type="PANTHER" id="PTHR31321:SF68">
    <property type="entry name" value="PECTINESTERASE 50-RELATED"/>
    <property type="match status" value="1"/>
</dbReference>
<dbReference type="Pfam" id="PF01095">
    <property type="entry name" value="Pectinesterase"/>
    <property type="match status" value="1"/>
</dbReference>
<dbReference type="SUPFAM" id="SSF51126">
    <property type="entry name" value="Pectin lyase-like"/>
    <property type="match status" value="1"/>
</dbReference>
<gene>
    <name type="primary">PME50</name>
    <name type="synonym">ARATH50</name>
    <name type="ordered locus">At5g07430</name>
    <name type="ORF">T2I1.140</name>
</gene>
<feature type="signal peptide" evidence="2">
    <location>
        <begin position="1"/>
        <end position="22"/>
    </location>
</feature>
<feature type="chain" id="PRO_0000371698" description="Probable pectinesterase 50">
    <location>
        <begin position="23"/>
        <end position="361"/>
    </location>
</feature>
<feature type="active site" description="Proton donor" evidence="1">
    <location>
        <position position="197"/>
    </location>
</feature>
<feature type="active site" description="Nucleophile" evidence="1">
    <location>
        <position position="218"/>
    </location>
</feature>
<feature type="binding site" evidence="1">
    <location>
        <position position="174"/>
    </location>
    <ligand>
        <name>substrate</name>
    </ligand>
</feature>
<feature type="binding site" evidence="1">
    <location>
        <position position="275"/>
    </location>
    <ligand>
        <name>substrate</name>
    </ligand>
</feature>
<feature type="binding site" evidence="1">
    <location>
        <position position="277"/>
    </location>
    <ligand>
        <name>substrate</name>
    </ligand>
</feature>
<feature type="site" description="Transition state stabilizer" evidence="1">
    <location>
        <position position="196"/>
    </location>
</feature>
<protein>
    <recommendedName>
        <fullName>Probable pectinesterase 50</fullName>
        <shortName>PE 50</shortName>
        <ecNumber>3.1.1.11</ecNumber>
    </recommendedName>
    <alternativeName>
        <fullName>Pectin methylesterase 50</fullName>
        <shortName>AtPME50</shortName>
    </alternativeName>
</protein>
<proteinExistence type="evidence at transcript level"/>
<comment type="function">
    <text evidence="1">Acts in the modification of cell walls via demethylesterification of cell wall pectin.</text>
</comment>
<comment type="catalytic activity">
    <reaction>
        <text>[(1-&gt;4)-alpha-D-galacturonosyl methyl ester](n) + n H2O = [(1-&gt;4)-alpha-D-galacturonosyl](n) + n methanol + n H(+)</text>
        <dbReference type="Rhea" id="RHEA:22380"/>
        <dbReference type="Rhea" id="RHEA-COMP:14570"/>
        <dbReference type="Rhea" id="RHEA-COMP:14573"/>
        <dbReference type="ChEBI" id="CHEBI:15377"/>
        <dbReference type="ChEBI" id="CHEBI:15378"/>
        <dbReference type="ChEBI" id="CHEBI:17790"/>
        <dbReference type="ChEBI" id="CHEBI:140522"/>
        <dbReference type="ChEBI" id="CHEBI:140523"/>
        <dbReference type="EC" id="3.1.1.11"/>
    </reaction>
</comment>
<comment type="pathway">
    <text>Glycan metabolism; pectin degradation; 2-dehydro-3-deoxy-D-gluconate from pectin: step 1/5.</text>
</comment>
<comment type="subcellular location">
    <subcellularLocation>
        <location evidence="1">Secreted</location>
        <location evidence="1">Cell wall</location>
    </subcellularLocation>
</comment>
<comment type="tissue specificity">
    <text evidence="3">Expressed in flower buds.</text>
</comment>
<comment type="similarity">
    <text evidence="4">Belongs to the pectinesterase family.</text>
</comment>
<keyword id="KW-0063">Aspartyl esterase</keyword>
<keyword id="KW-0134">Cell wall</keyword>
<keyword id="KW-0961">Cell wall biogenesis/degradation</keyword>
<keyword id="KW-0378">Hydrolase</keyword>
<keyword id="KW-1185">Reference proteome</keyword>
<keyword id="KW-0964">Secreted</keyword>
<keyword id="KW-0732">Signal</keyword>
<evidence type="ECO:0000250" key="1"/>
<evidence type="ECO:0000255" key="2"/>
<evidence type="ECO:0000269" key="3">
    <source>
    </source>
</evidence>
<evidence type="ECO:0000305" key="4"/>
<sequence>MGYISMSVVAFLVVFASPVVLATDTDPIPENRAQIPQWFKTNVKPYSQRKGTLDPALEAAEAARQIITVNQKGGANFKTLNEAIKSIPTGNKNRVIIKLAPGVYNEKVTIDIARPFITLLGQPGAETVLTYHGTAAQYGTVESATLIVWAEYFQAAHLTIKNTAPMPKPGSQGQALAMRINADKAAFYSCRFHGFQDTLCDDKGNHFFKDCYIEGTYDFIFGRGASLYLNTQLHAVGDGLRVITAQGRQSATEQNGYTFVHCKVTGTGTGIYLGRSWMSHPKVVYAFTEMTSVVNPSGWRENLNRGYDKTVFYGEYKCFGPGSHLEKRVPYTQDIDKNEVTPFLTLGYIKGSTWLLPPPKY</sequence>